<accession>Q197D6</accession>
<dbReference type="EC" id="3.4.22.-" evidence="5"/>
<dbReference type="EMBL" id="DQ643392">
    <property type="protein sequence ID" value="ABF82054.1"/>
    <property type="molecule type" value="Genomic_DNA"/>
</dbReference>
<dbReference type="RefSeq" id="YP_654596.1">
    <property type="nucleotide sequence ID" value="NC_008187.1"/>
</dbReference>
<dbReference type="KEGG" id="vg:4156274"/>
<dbReference type="OrthoDB" id="4752at10239"/>
<dbReference type="Proteomes" id="UP000001358">
    <property type="component" value="Genome"/>
</dbReference>
<dbReference type="GO" id="GO:0016020">
    <property type="term" value="C:membrane"/>
    <property type="evidence" value="ECO:0007669"/>
    <property type="project" value="UniProtKB-SubCell"/>
</dbReference>
<dbReference type="GO" id="GO:0008234">
    <property type="term" value="F:cysteine-type peptidase activity"/>
    <property type="evidence" value="ECO:0007669"/>
    <property type="project" value="UniProtKB-KW"/>
</dbReference>
<dbReference type="GO" id="GO:0006508">
    <property type="term" value="P:proteolysis"/>
    <property type="evidence" value="ECO:0007669"/>
    <property type="project" value="UniProtKB-KW"/>
</dbReference>
<dbReference type="Gene3D" id="3.90.70.10">
    <property type="entry name" value="Cysteine proteinases"/>
    <property type="match status" value="1"/>
</dbReference>
<dbReference type="InterPro" id="IPR038765">
    <property type="entry name" value="Papain-like_cys_pep_sf"/>
</dbReference>
<dbReference type="InterPro" id="IPR000169">
    <property type="entry name" value="Pept_cys_AS"/>
</dbReference>
<dbReference type="InterPro" id="IPR025660">
    <property type="entry name" value="Pept_his_AS"/>
</dbReference>
<dbReference type="InterPro" id="IPR013128">
    <property type="entry name" value="Peptidase_C1A"/>
</dbReference>
<dbReference type="InterPro" id="IPR000668">
    <property type="entry name" value="Peptidase_C1A_C"/>
</dbReference>
<dbReference type="PANTHER" id="PTHR12411">
    <property type="entry name" value="CYSTEINE PROTEASE FAMILY C1-RELATED"/>
    <property type="match status" value="1"/>
</dbReference>
<dbReference type="Pfam" id="PF00112">
    <property type="entry name" value="Peptidase_C1"/>
    <property type="match status" value="1"/>
</dbReference>
<dbReference type="PRINTS" id="PR00705">
    <property type="entry name" value="PAPAIN"/>
</dbReference>
<dbReference type="SMART" id="SM00645">
    <property type="entry name" value="Pept_C1"/>
    <property type="match status" value="1"/>
</dbReference>
<dbReference type="SUPFAM" id="SSF54001">
    <property type="entry name" value="Cysteine proteinases"/>
    <property type="match status" value="1"/>
</dbReference>
<dbReference type="PROSITE" id="PS00139">
    <property type="entry name" value="THIOL_PROTEASE_CYS"/>
    <property type="match status" value="1"/>
</dbReference>
<dbReference type="PROSITE" id="PS00639">
    <property type="entry name" value="THIOL_PROTEASE_HIS"/>
    <property type="match status" value="1"/>
</dbReference>
<comment type="function">
    <text>Probable cysteine protease.</text>
</comment>
<comment type="subcellular location">
    <subcellularLocation>
        <location evidence="5">Membrane</location>
        <topology evidence="5">Single-pass membrane protein</topology>
    </subcellularLocation>
</comment>
<comment type="similarity">
    <text evidence="3 4">Belongs to the peptidase C1 family.</text>
</comment>
<reference key="1">
    <citation type="journal article" date="2006" name="J. Virol.">
        <title>Genome of invertebrate iridescent virus type 3 (mosquito iridescent virus).</title>
        <authorList>
            <person name="Delhon G."/>
            <person name="Tulman E.R."/>
            <person name="Afonso C.L."/>
            <person name="Lu Z."/>
            <person name="Becnel J.J."/>
            <person name="Moser B.A."/>
            <person name="Kutish G.F."/>
            <person name="Rock D.L."/>
        </authorList>
    </citation>
    <scope>NUCLEOTIDE SEQUENCE [LARGE SCALE GENOMIC DNA]</scope>
</reference>
<gene>
    <name type="ORF">IIV3-024R</name>
</gene>
<protein>
    <recommendedName>
        <fullName>Probable cysteine proteinase 024R</fullName>
        <ecNumber evidence="5">3.4.22.-</ecNumber>
    </recommendedName>
</protein>
<name>VF224_IIV3</name>
<feature type="chain" id="PRO_0000376963" description="Probable cysteine proteinase 024R">
    <location>
        <begin position="1"/>
        <end position="491"/>
    </location>
</feature>
<feature type="transmembrane region" description="Helical" evidence="2">
    <location>
        <begin position="467"/>
        <end position="487"/>
    </location>
</feature>
<feature type="active site" evidence="1">
    <location>
        <position position="132"/>
    </location>
</feature>
<feature type="active site" evidence="1">
    <location>
        <position position="325"/>
    </location>
</feature>
<feature type="active site" evidence="1">
    <location>
        <position position="355"/>
    </location>
</feature>
<organism>
    <name type="scientific">Invertebrate iridescent virus 3</name>
    <name type="common">IIV-3</name>
    <name type="synonym">Mosquito iridescent virus</name>
    <dbReference type="NCBI Taxonomy" id="345201"/>
    <lineage>
        <taxon>Viruses</taxon>
        <taxon>Varidnaviria</taxon>
        <taxon>Bamfordvirae</taxon>
        <taxon>Nucleocytoviricota</taxon>
        <taxon>Megaviricetes</taxon>
        <taxon>Pimascovirales</taxon>
        <taxon>Iridoviridae</taxon>
        <taxon>Betairidovirinae</taxon>
        <taxon>Chloriridovirus</taxon>
    </lineage>
</organism>
<organismHost>
    <name type="scientific">Aedes vexans</name>
    <name type="common">Inland floodwater mosquito</name>
    <name type="synonym">Culex vexans</name>
    <dbReference type="NCBI Taxonomy" id="7163"/>
</organismHost>
<organismHost>
    <name type="scientific">Culex territans</name>
    <dbReference type="NCBI Taxonomy" id="42431"/>
</organismHost>
<organismHost>
    <name type="scientific">Culiseta annulata</name>
    <dbReference type="NCBI Taxonomy" id="332058"/>
</organismHost>
<organismHost>
    <name type="scientific">Ochlerotatus sollicitans</name>
    <name type="common">eastern saltmarsh mosquito</name>
    <dbReference type="NCBI Taxonomy" id="310513"/>
</organismHost>
<organismHost>
    <name type="scientific">Ochlerotatus taeniorhynchus</name>
    <name type="common">Black salt marsh mosquito</name>
    <name type="synonym">Aedes taeniorhynchus</name>
    <dbReference type="NCBI Taxonomy" id="329105"/>
</organismHost>
<organismHost>
    <name type="scientific">Psorophora ferox</name>
    <dbReference type="NCBI Taxonomy" id="7183"/>
</organismHost>
<keyword id="KW-0378">Hydrolase</keyword>
<keyword id="KW-0472">Membrane</keyword>
<keyword id="KW-0645">Protease</keyword>
<keyword id="KW-1185">Reference proteome</keyword>
<keyword id="KW-0788">Thiol protease</keyword>
<keyword id="KW-0812">Transmembrane</keyword>
<keyword id="KW-1133">Transmembrane helix</keyword>
<proteinExistence type="inferred from homology"/>
<sequence>MTLEWNIDDKFHLFFRKKRSVYIVGGVHHDEDEVDPKVVAQSGLQGDDGVVRLPPLNTLVNFLGHVSPYMHADYAFLHREWEYNRTASFADDLVNLPSVYDWRYVYPRDDEETKRKKRYIMPPDNQYLCGSCWAVSTASAIGDAYVVAGLVDWRPDISPAWALTCYPQGQCEGGSPALLLKEISQGNGIVSNHCLDYSFCASNPRCNGAAANHFGAENLSELVPKSCGCYVGDSMHYRYTVDPLIRTLAIGVGTVTEENIQSTIKRHILTHGPVLAGYFVLKNFTSGYFTRINGGVYFDRGNYIPGQALVFNDHYCSGDSYRGSHAVAIIGWGVARNVLYDTDKRGDVPYWYCRNSWRSTWGGDDGYFKMAMYPWNRVAQFEKLVTLRDRDNVPHRCGGIITFTVSTKPVKVKMNQLNTTLLPFPLLRDRSWYGGDQEEYRPAIVPKLAPSDGPNKPPLPLPVYYSALDLALLVLPALLIVIVVLIGKIPT</sequence>
<evidence type="ECO:0000250" key="1"/>
<evidence type="ECO:0000255" key="2"/>
<evidence type="ECO:0000255" key="3">
    <source>
        <dbReference type="PROSITE-ProRule" id="PRU10088"/>
    </source>
</evidence>
<evidence type="ECO:0000255" key="4">
    <source>
        <dbReference type="PROSITE-ProRule" id="PRU10089"/>
    </source>
</evidence>
<evidence type="ECO:0000305" key="5"/>